<organism>
    <name type="scientific">Homo sapiens</name>
    <name type="common">Human</name>
    <dbReference type="NCBI Taxonomy" id="9606"/>
    <lineage>
        <taxon>Eukaryota</taxon>
        <taxon>Metazoa</taxon>
        <taxon>Chordata</taxon>
        <taxon>Craniata</taxon>
        <taxon>Vertebrata</taxon>
        <taxon>Euteleostomi</taxon>
        <taxon>Mammalia</taxon>
        <taxon>Eutheria</taxon>
        <taxon>Euarchontoglires</taxon>
        <taxon>Primates</taxon>
        <taxon>Haplorrhini</taxon>
        <taxon>Catarrhini</taxon>
        <taxon>Hominidae</taxon>
        <taxon>Homo</taxon>
    </lineage>
</organism>
<protein>
    <recommendedName>
        <fullName>Homeobox protein SIX3</fullName>
    </recommendedName>
    <alternativeName>
        <fullName>Sine oculis homeobox homolog 3</fullName>
    </alternativeName>
</protein>
<keyword id="KW-0217">Developmental protein</keyword>
<keyword id="KW-0225">Disease variant</keyword>
<keyword id="KW-0238">DNA-binding</keyword>
<keyword id="KW-0370">Holoprosencephaly</keyword>
<keyword id="KW-0371">Homeobox</keyword>
<keyword id="KW-0539">Nucleus</keyword>
<keyword id="KW-1267">Proteomics identification</keyword>
<keyword id="KW-1185">Reference proteome</keyword>
<keyword id="KW-0678">Repressor</keyword>
<keyword id="KW-0804">Transcription</keyword>
<keyword id="KW-0805">Transcription regulation</keyword>
<comment type="function">
    <text evidence="1 12">Transcriptional regulator which can act as both a transcriptional repressor and activator by binding a ATTA homeodomain core recognition sequence on these target genes. During forebrain development represses WNT1 expression allowing zona limitans intrathalamica formation and thereby ensuring proper anterio-posterior patterning of the diencephalon and formation of the rostral diencephalon. Acts as a direct upstream activator of SHH expression in the rostral diencephalon ventral midline and that in turn SHH maintains its expression. In addition, Six3 activity is required for the formation of the telencephalon. During postnatal stages of brain development is necessary for ependymal cell maturation by promoting the maturation of radial glia into ependymal cells through regulation of neuroblast proliferation and migration. Acts on the proliferation and differentiation of neural progenitor cells through activating transcription of CCND1 and CCND2. During early lens formation plays a role in lens induction and specification by activating directly PAX6 in the presumptive lens ectoderm. In turn PAX6 activates SIX3 resulting in activation of PDGFRA and CCND1 promoting cell proliferation. Also is required for the neuroretina development by directly suppressing WNT8B expression in the anterior neural plate territory. Its action during retina development and lens morphogenesis is TLE5 and TLE4-dependent manner. Furthermore, during eye development regulates several genes expression. Before and during early lens development represses the CRYGF promoter by binding a SIX repressor element. Directly activates RHO transcription, or cooperates with CRX or NRL. Six3 also functions in the formation of the proximodistal axis of the optic cup, and promotes the formation of optic vesicles-like structures. During pituitary development, acts in parallel or alternatively with HESX1 to control cell proliferation through Wnt/beta-catenin pathway (By similarity). Plays a role in eye development by suppressing WNT1 expression and in dorsal-ventral patterning by repressing BMP signaling pathway.</text>
</comment>
<comment type="subunit">
    <text evidence="1 5 6 7">Interacts with EYA4; translocates EYA4 from the cytoplasm to the nucleus and promotes activation of their target genes (By similarity). Interacts with MTA1 and HDAC2; represses its own transcription (By similarity). Interacts with MTA1; facilitates the binding of SIX3 to the core DNA motif of SIX3 promoter (By similarity). Interacts with EYA1; promotes EYA1 translocation to the nucleus (By similarity). Interacts with TLE1 and TLE5 (via Q domain); can act in combination with either TLE1 and/or TLE5 leading to transcriptional repression or activation, respectively. Interacts (via homeobox) with NR4A3; differentially regulates the transcriptional activities NR4A3. Interacts with GMNN. Interacts with TLE4.</text>
</comment>
<comment type="interaction">
    <interactant intactId="EBI-13644574">
        <id>O95343</id>
    </interactant>
    <interactant intactId="EBI-13644623">
        <id>Q92570</id>
        <label>NR4A3</label>
    </interactant>
    <organismsDiffer>false</organismsDiffer>
    <experiments>3</experiments>
</comment>
<comment type="subcellular location">
    <subcellularLocation>
        <location evidence="1 2">Nucleus</location>
    </subcellularLocation>
</comment>
<comment type="developmental stage">
    <text evidence="11">Expression is detected in Rathke's pouch and overlying ventral diencephalon at carnegie stage 17 and in the anterior and posterior lobes of the pituitary at carnegie stage 20. At fetal stage, expression is observed in the anterior pituitary, and the ventricular zones of the hypothalamus and telencephalic vesicles.</text>
</comment>
<comment type="disease" evidence="4 8 9 10 12 14">
    <disease id="DI-00566">
        <name>Holoprosencephaly 2</name>
        <acronym>HPE2</acronym>
        <description>A structural anomaly of the brain, in which the developing forebrain fails to correctly separate into right and left hemispheres. Holoprosencephaly is genetically heterogeneous and associated with several distinct facies and phenotypic variability.</description>
        <dbReference type="MIM" id="157170"/>
    </disease>
    <text>The disease is caused by variants affecting the gene represented in this entry.</text>
</comment>
<comment type="disease" evidence="13">
    <disease id="DI-02284">
        <name>Schizencephaly</name>
        <acronym>SCHZC</acronym>
        <description>Extremely rare human congenital disorder characterized by a full-thickness cleft within the cerebral hemispheres. These clefts are lined with gray matter and most commonly involve the parasylvian regions. Large portions of the cerebral hemispheres may be absent and replaced by cerebro-spinal fluid.</description>
        <dbReference type="MIM" id="269160"/>
    </disease>
    <text>The disease is caused by variants affecting the gene represented in this entry.</text>
</comment>
<comment type="similarity">
    <text evidence="15">Belongs to the SIX/Sine oculis homeobox family.</text>
</comment>
<dbReference type="EMBL" id="AF092047">
    <property type="protein sequence ID" value="AAD11939.1"/>
    <property type="molecule type" value="Genomic_DNA"/>
</dbReference>
<dbReference type="EMBL" id="AF049339">
    <property type="protein sequence ID" value="AAD15753.1"/>
    <property type="molecule type" value="Genomic_DNA"/>
</dbReference>
<dbReference type="EMBL" id="AF083891">
    <property type="protein sequence ID" value="AAD51091.1"/>
    <property type="molecule type" value="Genomic_DNA"/>
</dbReference>
<dbReference type="EMBL" id="AJ012611">
    <property type="protein sequence ID" value="CAB42539.1"/>
    <property type="molecule type" value="mRNA"/>
</dbReference>
<dbReference type="EMBL" id="AC012354">
    <property type="protein sequence ID" value="AAX93283.1"/>
    <property type="molecule type" value="Genomic_DNA"/>
</dbReference>
<dbReference type="EMBL" id="CH471053">
    <property type="protein sequence ID" value="EAX00267.1"/>
    <property type="molecule type" value="Genomic_DNA"/>
</dbReference>
<dbReference type="EMBL" id="CH471053">
    <property type="protein sequence ID" value="EAX00268.1"/>
    <property type="molecule type" value="Genomic_DNA"/>
</dbReference>
<dbReference type="CCDS" id="CCDS1821.1"/>
<dbReference type="RefSeq" id="NP_005404.1">
    <property type="nucleotide sequence ID" value="NM_005413.4"/>
</dbReference>
<dbReference type="BMRB" id="O95343"/>
<dbReference type="SMR" id="O95343"/>
<dbReference type="BioGRID" id="112387">
    <property type="interactions" value="33"/>
</dbReference>
<dbReference type="CORUM" id="O95343"/>
<dbReference type="FunCoup" id="O95343">
    <property type="interactions" value="352"/>
</dbReference>
<dbReference type="IntAct" id="O95343">
    <property type="interactions" value="9"/>
</dbReference>
<dbReference type="STRING" id="9606.ENSP00000260653"/>
<dbReference type="iPTMnet" id="O95343"/>
<dbReference type="PhosphoSitePlus" id="O95343"/>
<dbReference type="BioMuta" id="SIX3"/>
<dbReference type="jPOST" id="O95343"/>
<dbReference type="MassIVE" id="O95343"/>
<dbReference type="PaxDb" id="9606-ENSP00000260653"/>
<dbReference type="PeptideAtlas" id="O95343"/>
<dbReference type="ProteomicsDB" id="50811"/>
<dbReference type="Antibodypedia" id="29931">
    <property type="antibodies" value="273 antibodies from 29 providers"/>
</dbReference>
<dbReference type="DNASU" id="6496"/>
<dbReference type="Ensembl" id="ENST00000260653.5">
    <property type="protein sequence ID" value="ENSP00000260653.3"/>
    <property type="gene ID" value="ENSG00000138083.5"/>
</dbReference>
<dbReference type="GeneID" id="6496"/>
<dbReference type="KEGG" id="hsa:6496"/>
<dbReference type="MANE-Select" id="ENST00000260653.5">
    <property type="protein sequence ID" value="ENSP00000260653.3"/>
    <property type="RefSeq nucleotide sequence ID" value="NM_005413.4"/>
    <property type="RefSeq protein sequence ID" value="NP_005404.1"/>
</dbReference>
<dbReference type="UCSC" id="uc002run.2">
    <property type="organism name" value="human"/>
</dbReference>
<dbReference type="AGR" id="HGNC:10889"/>
<dbReference type="CTD" id="6496"/>
<dbReference type="DisGeNET" id="6496"/>
<dbReference type="GeneCards" id="SIX3"/>
<dbReference type="GeneReviews" id="SIX3"/>
<dbReference type="HGNC" id="HGNC:10889">
    <property type="gene designation" value="SIX3"/>
</dbReference>
<dbReference type="HPA" id="ENSG00000138083">
    <property type="expression patterns" value="Tissue enhanced (brain, pituitary gland, retina)"/>
</dbReference>
<dbReference type="MalaCards" id="SIX3"/>
<dbReference type="MIM" id="157170">
    <property type="type" value="phenotype"/>
</dbReference>
<dbReference type="MIM" id="269160">
    <property type="type" value="phenotype"/>
</dbReference>
<dbReference type="MIM" id="603714">
    <property type="type" value="gene"/>
</dbReference>
<dbReference type="neXtProt" id="NX_O95343"/>
<dbReference type="OpenTargets" id="ENSG00000138083"/>
<dbReference type="Orphanet" id="485275">
    <property type="disease" value="Acquired schizencephaly"/>
</dbReference>
<dbReference type="Orphanet" id="93925">
    <property type="disease" value="Alobar holoprosencephaly"/>
</dbReference>
<dbReference type="Orphanet" id="93924">
    <property type="disease" value="Lobar holoprosencephaly"/>
</dbReference>
<dbReference type="Orphanet" id="280200">
    <property type="disease" value="Microform holoprosencephaly"/>
</dbReference>
<dbReference type="Orphanet" id="93926">
    <property type="disease" value="Midline interhemispheric variant of holoprosencephaly"/>
</dbReference>
<dbReference type="Orphanet" id="220386">
    <property type="disease" value="Semilobar holoprosencephaly"/>
</dbReference>
<dbReference type="Orphanet" id="280195">
    <property type="disease" value="Septopreoptic holoprosencephaly"/>
</dbReference>
<dbReference type="PharmGKB" id="PA35789"/>
<dbReference type="VEuPathDB" id="HostDB:ENSG00000138083"/>
<dbReference type="eggNOG" id="KOG0775">
    <property type="taxonomic scope" value="Eukaryota"/>
</dbReference>
<dbReference type="GeneTree" id="ENSGT00940000160346"/>
<dbReference type="HOGENOM" id="CLU_046914_0_0_1"/>
<dbReference type="InParanoid" id="O95343"/>
<dbReference type="OMA" id="PGCPTHN"/>
<dbReference type="OrthoDB" id="3501850at2759"/>
<dbReference type="PAN-GO" id="O95343">
    <property type="GO annotations" value="7 GO annotations based on evolutionary models"/>
</dbReference>
<dbReference type="PhylomeDB" id="O95343"/>
<dbReference type="TreeFam" id="TF315545"/>
<dbReference type="PathwayCommons" id="O95343"/>
<dbReference type="SignaLink" id="O95343"/>
<dbReference type="SIGNOR" id="O95343"/>
<dbReference type="BioGRID-ORCS" id="6496">
    <property type="hits" value="9 hits in 1167 CRISPR screens"/>
</dbReference>
<dbReference type="ChiTaRS" id="SIX3">
    <property type="organism name" value="human"/>
</dbReference>
<dbReference type="GeneWiki" id="SIX3"/>
<dbReference type="GenomeRNAi" id="6496"/>
<dbReference type="Pharos" id="O95343">
    <property type="development level" value="Tbio"/>
</dbReference>
<dbReference type="PRO" id="PR:O95343"/>
<dbReference type="Proteomes" id="UP000005640">
    <property type="component" value="Chromosome 2"/>
</dbReference>
<dbReference type="RNAct" id="O95343">
    <property type="molecule type" value="protein"/>
</dbReference>
<dbReference type="Bgee" id="ENSG00000138083">
    <property type="expression patterns" value="Expressed in pigmented layer of retina and 79 other cell types or tissues"/>
</dbReference>
<dbReference type="GO" id="GO:0000785">
    <property type="term" value="C:chromatin"/>
    <property type="evidence" value="ECO:0000247"/>
    <property type="project" value="NTNU_SB"/>
</dbReference>
<dbReference type="GO" id="GO:0005634">
    <property type="term" value="C:nucleus"/>
    <property type="evidence" value="ECO:0000318"/>
    <property type="project" value="GO_Central"/>
</dbReference>
<dbReference type="GO" id="GO:0005667">
    <property type="term" value="C:transcription regulator complex"/>
    <property type="evidence" value="ECO:0000318"/>
    <property type="project" value="GO_Central"/>
</dbReference>
<dbReference type="GO" id="GO:0001228">
    <property type="term" value="F:DNA-binding transcription activator activity, RNA polymerase II-specific"/>
    <property type="evidence" value="ECO:0000250"/>
    <property type="project" value="UniProtKB"/>
</dbReference>
<dbReference type="GO" id="GO:0000981">
    <property type="term" value="F:DNA-binding transcription factor activity, RNA polymerase II-specific"/>
    <property type="evidence" value="ECO:0000247"/>
    <property type="project" value="NTNU_SB"/>
</dbReference>
<dbReference type="GO" id="GO:0042826">
    <property type="term" value="F:histone deacetylase binding"/>
    <property type="evidence" value="ECO:0007669"/>
    <property type="project" value="Ensembl"/>
</dbReference>
<dbReference type="GO" id="GO:0000978">
    <property type="term" value="F:RNA polymerase II cis-regulatory region sequence-specific DNA binding"/>
    <property type="evidence" value="ECO:0000314"/>
    <property type="project" value="MGI"/>
</dbReference>
<dbReference type="GO" id="GO:1990837">
    <property type="term" value="F:sequence-specific double-stranded DNA binding"/>
    <property type="evidence" value="ECO:0000314"/>
    <property type="project" value="ARUK-UCL"/>
</dbReference>
<dbReference type="GO" id="GO:0001222">
    <property type="term" value="F:transcription corepressor binding"/>
    <property type="evidence" value="ECO:0000353"/>
    <property type="project" value="UniProtKB"/>
</dbReference>
<dbReference type="GO" id="GO:1902742">
    <property type="term" value="P:apoptotic process involved in development"/>
    <property type="evidence" value="ECO:0000250"/>
    <property type="project" value="UniProtKB"/>
</dbReference>
<dbReference type="GO" id="GO:0007420">
    <property type="term" value="P:brain development"/>
    <property type="evidence" value="ECO:0000318"/>
    <property type="project" value="GO_Central"/>
</dbReference>
<dbReference type="GO" id="GO:0021846">
    <property type="term" value="P:cell proliferation in forebrain"/>
    <property type="evidence" value="ECO:0000250"/>
    <property type="project" value="UniProtKB"/>
</dbReference>
<dbReference type="GO" id="GO:0048512">
    <property type="term" value="P:circadian behavior"/>
    <property type="evidence" value="ECO:0007669"/>
    <property type="project" value="Ensembl"/>
</dbReference>
<dbReference type="GO" id="GO:0002070">
    <property type="term" value="P:epithelial cell maturation"/>
    <property type="evidence" value="ECO:0000250"/>
    <property type="project" value="UniProtKB"/>
</dbReference>
<dbReference type="GO" id="GO:0001654">
    <property type="term" value="P:eye development"/>
    <property type="evidence" value="ECO:0000314"/>
    <property type="project" value="UniProtKB"/>
</dbReference>
<dbReference type="GO" id="GO:0021797">
    <property type="term" value="P:forebrain anterior/posterior pattern specification"/>
    <property type="evidence" value="ECO:0007669"/>
    <property type="project" value="Ensembl"/>
</dbReference>
<dbReference type="GO" id="GO:0021798">
    <property type="term" value="P:forebrain dorsal/ventral pattern formation"/>
    <property type="evidence" value="ECO:0000314"/>
    <property type="project" value="UniProtKB"/>
</dbReference>
<dbReference type="GO" id="GO:0008406">
    <property type="term" value="P:gonad development"/>
    <property type="evidence" value="ECO:0007669"/>
    <property type="project" value="Ensembl"/>
</dbReference>
<dbReference type="GO" id="GO:0002088">
    <property type="term" value="P:lens development in camera-type eye"/>
    <property type="evidence" value="ECO:0000250"/>
    <property type="project" value="UniProtKB"/>
</dbReference>
<dbReference type="GO" id="GO:1990086">
    <property type="term" value="P:lens fiber cell apoptotic process"/>
    <property type="evidence" value="ECO:0000250"/>
    <property type="project" value="UniProtKB"/>
</dbReference>
<dbReference type="GO" id="GO:0070306">
    <property type="term" value="P:lens fiber cell differentiation"/>
    <property type="evidence" value="ECO:0000250"/>
    <property type="project" value="UniProtKB"/>
</dbReference>
<dbReference type="GO" id="GO:0060235">
    <property type="term" value="P:lens induction in camera-type eye"/>
    <property type="evidence" value="ECO:0007669"/>
    <property type="project" value="Ensembl"/>
</dbReference>
<dbReference type="GO" id="GO:0035264">
    <property type="term" value="P:multicellular organism growth"/>
    <property type="evidence" value="ECO:0007669"/>
    <property type="project" value="Ensembl"/>
</dbReference>
<dbReference type="GO" id="GO:0045892">
    <property type="term" value="P:negative regulation of DNA-templated transcription"/>
    <property type="evidence" value="ECO:0000314"/>
    <property type="project" value="UniProtKB"/>
</dbReference>
<dbReference type="GO" id="GO:0045665">
    <property type="term" value="P:negative regulation of neuron differentiation"/>
    <property type="evidence" value="ECO:0000250"/>
    <property type="project" value="UniProtKB"/>
</dbReference>
<dbReference type="GO" id="GO:0030178">
    <property type="term" value="P:negative regulation of Wnt signaling pathway"/>
    <property type="evidence" value="ECO:0007669"/>
    <property type="project" value="Ensembl"/>
</dbReference>
<dbReference type="GO" id="GO:0014016">
    <property type="term" value="P:neuroblast differentiation"/>
    <property type="evidence" value="ECO:0000250"/>
    <property type="project" value="UniProtKB"/>
</dbReference>
<dbReference type="GO" id="GO:0097402">
    <property type="term" value="P:neuroblast migration"/>
    <property type="evidence" value="ECO:0000250"/>
    <property type="project" value="UniProtKB"/>
</dbReference>
<dbReference type="GO" id="GO:0003404">
    <property type="term" value="P:optic vesicle morphogenesis"/>
    <property type="evidence" value="ECO:0000250"/>
    <property type="project" value="UniProtKB"/>
</dbReference>
<dbReference type="GO" id="GO:0021983">
    <property type="term" value="P:pituitary gland development"/>
    <property type="evidence" value="ECO:0000250"/>
    <property type="project" value="UniProtKB"/>
</dbReference>
<dbReference type="GO" id="GO:0006606">
    <property type="term" value="P:protein import into nucleus"/>
    <property type="evidence" value="ECO:0007669"/>
    <property type="project" value="Ensembl"/>
</dbReference>
<dbReference type="GO" id="GO:0009946">
    <property type="term" value="P:proximal/distal axis specification"/>
    <property type="evidence" value="ECO:0000250"/>
    <property type="project" value="UniProtKB"/>
</dbReference>
<dbReference type="GO" id="GO:1901987">
    <property type="term" value="P:regulation of cell cycle phase transition"/>
    <property type="evidence" value="ECO:0000250"/>
    <property type="project" value="UniProtKB"/>
</dbReference>
<dbReference type="GO" id="GO:0042127">
    <property type="term" value="P:regulation of cell population proliferation"/>
    <property type="evidence" value="ECO:0000250"/>
    <property type="project" value="UniProtKB"/>
</dbReference>
<dbReference type="GO" id="GO:2000177">
    <property type="term" value="P:regulation of neural precursor cell proliferation"/>
    <property type="evidence" value="ECO:0000250"/>
    <property type="project" value="UniProtKB"/>
</dbReference>
<dbReference type="GO" id="GO:0061074">
    <property type="term" value="P:regulation of neural retina development"/>
    <property type="evidence" value="ECO:0000250"/>
    <property type="project" value="UniProtKB"/>
</dbReference>
<dbReference type="GO" id="GO:1902692">
    <property type="term" value="P:regulation of neuroblast proliferation"/>
    <property type="evidence" value="ECO:0000250"/>
    <property type="project" value="UniProtKB"/>
</dbReference>
<dbReference type="GO" id="GO:0006357">
    <property type="term" value="P:regulation of transcription by RNA polymerase II"/>
    <property type="evidence" value="ECO:0000318"/>
    <property type="project" value="GO_Central"/>
</dbReference>
<dbReference type="GO" id="GO:0021537">
    <property type="term" value="P:telencephalon development"/>
    <property type="evidence" value="ECO:0000250"/>
    <property type="project" value="UniProtKB"/>
</dbReference>
<dbReference type="GO" id="GO:0021978">
    <property type="term" value="P:telencephalon regionalization"/>
    <property type="evidence" value="ECO:0000250"/>
    <property type="project" value="UniProtKB"/>
</dbReference>
<dbReference type="GO" id="GO:0030878">
    <property type="term" value="P:thyroid gland development"/>
    <property type="evidence" value="ECO:0007669"/>
    <property type="project" value="Ensembl"/>
</dbReference>
<dbReference type="GO" id="GO:0007601">
    <property type="term" value="P:visual perception"/>
    <property type="evidence" value="ECO:0000304"/>
    <property type="project" value="ProtInc"/>
</dbReference>
<dbReference type="CDD" id="cd00086">
    <property type="entry name" value="homeodomain"/>
    <property type="match status" value="1"/>
</dbReference>
<dbReference type="FunFam" id="1.10.10.60:FF:000046">
    <property type="entry name" value="SIX homeobox 3"/>
    <property type="match status" value="1"/>
</dbReference>
<dbReference type="Gene3D" id="1.10.10.60">
    <property type="entry name" value="Homeodomain-like"/>
    <property type="match status" value="1"/>
</dbReference>
<dbReference type="InterPro" id="IPR001356">
    <property type="entry name" value="HD"/>
</dbReference>
<dbReference type="InterPro" id="IPR009057">
    <property type="entry name" value="Homeodomain-like_sf"/>
</dbReference>
<dbReference type="InterPro" id="IPR031701">
    <property type="entry name" value="SIX1_SD"/>
</dbReference>
<dbReference type="PANTHER" id="PTHR10390">
    <property type="entry name" value="HOMEOBOX PROTEIN SIX"/>
    <property type="match status" value="1"/>
</dbReference>
<dbReference type="PANTHER" id="PTHR10390:SF31">
    <property type="entry name" value="HOMEOBOX PROTEIN SIX3"/>
    <property type="match status" value="1"/>
</dbReference>
<dbReference type="Pfam" id="PF00046">
    <property type="entry name" value="Homeodomain"/>
    <property type="match status" value="1"/>
</dbReference>
<dbReference type="Pfam" id="PF16878">
    <property type="entry name" value="SIX1_SD"/>
    <property type="match status" value="1"/>
</dbReference>
<dbReference type="SMART" id="SM00389">
    <property type="entry name" value="HOX"/>
    <property type="match status" value="1"/>
</dbReference>
<dbReference type="SUPFAM" id="SSF46689">
    <property type="entry name" value="Homeodomain-like"/>
    <property type="match status" value="1"/>
</dbReference>
<dbReference type="PROSITE" id="PS50071">
    <property type="entry name" value="HOMEOBOX_2"/>
    <property type="match status" value="1"/>
</dbReference>
<accession>O95343</accession>
<accession>D6W5A5</accession>
<accession>Q53T42</accession>
<name>SIX3_HUMAN</name>
<gene>
    <name type="primary">SIX3</name>
</gene>
<proteinExistence type="evidence at protein level"/>
<evidence type="ECO:0000250" key="1">
    <source>
        <dbReference type="UniProtKB" id="Q62233"/>
    </source>
</evidence>
<evidence type="ECO:0000255" key="2">
    <source>
        <dbReference type="PROSITE-ProRule" id="PRU00108"/>
    </source>
</evidence>
<evidence type="ECO:0000256" key="3">
    <source>
        <dbReference type="SAM" id="MobiDB-lite"/>
    </source>
</evidence>
<evidence type="ECO:0000269" key="4">
    <source>
    </source>
</evidence>
<evidence type="ECO:0000269" key="5">
    <source>
    </source>
</evidence>
<evidence type="ECO:0000269" key="6">
    <source>
    </source>
</evidence>
<evidence type="ECO:0000269" key="7">
    <source>
    </source>
</evidence>
<evidence type="ECO:0000269" key="8">
    <source>
    </source>
</evidence>
<evidence type="ECO:0000269" key="9">
    <source>
    </source>
</evidence>
<evidence type="ECO:0000269" key="10">
    <source>
    </source>
</evidence>
<evidence type="ECO:0000269" key="11">
    <source>
    </source>
</evidence>
<evidence type="ECO:0000269" key="12">
    <source>
    </source>
</evidence>
<evidence type="ECO:0000269" key="13">
    <source>
    </source>
</evidence>
<evidence type="ECO:0000269" key="14">
    <source>
    </source>
</evidence>
<evidence type="ECO:0000305" key="15"/>
<reference key="1">
    <citation type="journal article" date="1999" name="Genomics">
        <title>Genomic cloning, structure, expression pattern, and chromosomal location of the human SIX3 gene.</title>
        <authorList>
            <person name="Granadino B."/>
            <person name="Gallardo M.E."/>
            <person name="Lopez-Rios J."/>
            <person name="Sanz R."/>
            <person name="Ramos C."/>
            <person name="Ayuso C."/>
            <person name="Bovolenta P."/>
            <person name="Rodriguez de Cordoba S."/>
        </authorList>
    </citation>
    <scope>NUCLEOTIDE SEQUENCE [GENOMIC DNA]</scope>
</reference>
<reference key="2">
    <citation type="journal article" date="1999" name="Ophthalmic Genet.">
        <title>Sequence and location of SIX3, a homeobox gene expressed in the human eye.</title>
        <authorList>
            <person name="Leppert G.S."/>
            <person name="Yang J.-M."/>
            <person name="Sundin O.H."/>
        </authorList>
    </citation>
    <scope>NUCLEOTIDE SEQUENCE [GENOMIC DNA]</scope>
</reference>
<reference key="3">
    <citation type="submission" date="1998-11" db="EMBL/GenBank/DDBJ databases">
        <title>SIX3, a member of the Sine oculis/Six family of transcription factors, is expressed in the developing and adult human eye.</title>
        <authorList>
            <person name="Clark B.J."/>
            <person name="Hanson I.M."/>
            <person name="Brown A.G."/>
            <person name="Ferrier R.K."/>
            <person name="Prosser J."/>
            <person name="van Heyningen V."/>
        </authorList>
    </citation>
    <scope>NUCLEOTIDE SEQUENCE [MRNA]</scope>
    <source>
        <tissue>Retina</tissue>
    </source>
</reference>
<reference key="4">
    <citation type="journal article" date="2005" name="Nature">
        <title>Generation and annotation of the DNA sequences of human chromosomes 2 and 4.</title>
        <authorList>
            <person name="Hillier L.W."/>
            <person name="Graves T.A."/>
            <person name="Fulton R.S."/>
            <person name="Fulton L.A."/>
            <person name="Pepin K.H."/>
            <person name="Minx P."/>
            <person name="Wagner-McPherson C."/>
            <person name="Layman D."/>
            <person name="Wylie K."/>
            <person name="Sekhon M."/>
            <person name="Becker M.C."/>
            <person name="Fewell G.A."/>
            <person name="Delehaunty K.D."/>
            <person name="Miner T.L."/>
            <person name="Nash W.E."/>
            <person name="Kremitzki C."/>
            <person name="Oddy L."/>
            <person name="Du H."/>
            <person name="Sun H."/>
            <person name="Bradshaw-Cordum H."/>
            <person name="Ali J."/>
            <person name="Carter J."/>
            <person name="Cordes M."/>
            <person name="Harris A."/>
            <person name="Isak A."/>
            <person name="van Brunt A."/>
            <person name="Nguyen C."/>
            <person name="Du F."/>
            <person name="Courtney L."/>
            <person name="Kalicki J."/>
            <person name="Ozersky P."/>
            <person name="Abbott S."/>
            <person name="Armstrong J."/>
            <person name="Belter E.A."/>
            <person name="Caruso L."/>
            <person name="Cedroni M."/>
            <person name="Cotton M."/>
            <person name="Davidson T."/>
            <person name="Desai A."/>
            <person name="Elliott G."/>
            <person name="Erb T."/>
            <person name="Fronick C."/>
            <person name="Gaige T."/>
            <person name="Haakenson W."/>
            <person name="Haglund K."/>
            <person name="Holmes A."/>
            <person name="Harkins R."/>
            <person name="Kim K."/>
            <person name="Kruchowski S.S."/>
            <person name="Strong C.M."/>
            <person name="Grewal N."/>
            <person name="Goyea E."/>
            <person name="Hou S."/>
            <person name="Levy A."/>
            <person name="Martinka S."/>
            <person name="Mead K."/>
            <person name="McLellan M.D."/>
            <person name="Meyer R."/>
            <person name="Randall-Maher J."/>
            <person name="Tomlinson C."/>
            <person name="Dauphin-Kohlberg S."/>
            <person name="Kozlowicz-Reilly A."/>
            <person name="Shah N."/>
            <person name="Swearengen-Shahid S."/>
            <person name="Snider J."/>
            <person name="Strong J.T."/>
            <person name="Thompson J."/>
            <person name="Yoakum M."/>
            <person name="Leonard S."/>
            <person name="Pearman C."/>
            <person name="Trani L."/>
            <person name="Radionenko M."/>
            <person name="Waligorski J.E."/>
            <person name="Wang C."/>
            <person name="Rock S.M."/>
            <person name="Tin-Wollam A.-M."/>
            <person name="Maupin R."/>
            <person name="Latreille P."/>
            <person name="Wendl M.C."/>
            <person name="Yang S.-P."/>
            <person name="Pohl C."/>
            <person name="Wallis J.W."/>
            <person name="Spieth J."/>
            <person name="Bieri T.A."/>
            <person name="Berkowicz N."/>
            <person name="Nelson J.O."/>
            <person name="Osborne J."/>
            <person name="Ding L."/>
            <person name="Meyer R."/>
            <person name="Sabo A."/>
            <person name="Shotland Y."/>
            <person name="Sinha P."/>
            <person name="Wohldmann P.E."/>
            <person name="Cook L.L."/>
            <person name="Hickenbotham M.T."/>
            <person name="Eldred J."/>
            <person name="Williams D."/>
            <person name="Jones T.A."/>
            <person name="She X."/>
            <person name="Ciccarelli F.D."/>
            <person name="Izaurralde E."/>
            <person name="Taylor J."/>
            <person name="Schmutz J."/>
            <person name="Myers R.M."/>
            <person name="Cox D.R."/>
            <person name="Huang X."/>
            <person name="McPherson J.D."/>
            <person name="Mardis E.R."/>
            <person name="Clifton S.W."/>
            <person name="Warren W.C."/>
            <person name="Chinwalla A.T."/>
            <person name="Eddy S.R."/>
            <person name="Marra M.A."/>
            <person name="Ovcharenko I."/>
            <person name="Furey T.S."/>
            <person name="Miller W."/>
            <person name="Eichler E.E."/>
            <person name="Bork P."/>
            <person name="Suyama M."/>
            <person name="Torrents D."/>
            <person name="Waterston R.H."/>
            <person name="Wilson R.K."/>
        </authorList>
    </citation>
    <scope>NUCLEOTIDE SEQUENCE [LARGE SCALE GENOMIC DNA]</scope>
</reference>
<reference key="5">
    <citation type="submission" date="2005-09" db="EMBL/GenBank/DDBJ databases">
        <authorList>
            <person name="Mural R.J."/>
            <person name="Istrail S."/>
            <person name="Sutton G.G."/>
            <person name="Florea L."/>
            <person name="Halpern A.L."/>
            <person name="Mobarry C.M."/>
            <person name="Lippert R."/>
            <person name="Walenz B."/>
            <person name="Shatkay H."/>
            <person name="Dew I."/>
            <person name="Miller J.R."/>
            <person name="Flanigan M.J."/>
            <person name="Edwards N.J."/>
            <person name="Bolanos R."/>
            <person name="Fasulo D."/>
            <person name="Halldorsson B.V."/>
            <person name="Hannenhalli S."/>
            <person name="Turner R."/>
            <person name="Yooseph S."/>
            <person name="Lu F."/>
            <person name="Nusskern D.R."/>
            <person name="Shue B.C."/>
            <person name="Zheng X.H."/>
            <person name="Zhong F."/>
            <person name="Delcher A.L."/>
            <person name="Huson D.H."/>
            <person name="Kravitz S.A."/>
            <person name="Mouchard L."/>
            <person name="Reinert K."/>
            <person name="Remington K.A."/>
            <person name="Clark A.G."/>
            <person name="Waterman M.S."/>
            <person name="Eichler E.E."/>
            <person name="Adams M.D."/>
            <person name="Hunkapiller M.W."/>
            <person name="Myers E.W."/>
            <person name="Venter J.C."/>
        </authorList>
    </citation>
    <scope>NUCLEOTIDE SEQUENCE [LARGE SCALE GENOMIC DNA]</scope>
</reference>
<reference key="6">
    <citation type="submission" date="2005-07" db="EMBL/GenBank/DDBJ databases">
        <authorList>
            <person name="Mural R.J."/>
            <person name="Istrail S."/>
            <person name="Sutton G.G."/>
            <person name="Florea L."/>
            <person name="Halpern A.L."/>
            <person name="Mobarry C.M."/>
            <person name="Lippert R."/>
            <person name="Walenz B."/>
            <person name="Shatkay H."/>
            <person name="Dew I."/>
            <person name="Miller J.R."/>
            <person name="Flanigan M.J."/>
            <person name="Edwards N.J."/>
            <person name="Bolanos R."/>
            <person name="Fasulo D."/>
            <person name="Halldorsson B.V."/>
            <person name="Hannenhalli S."/>
            <person name="Turner R."/>
            <person name="Yooseph S."/>
            <person name="Lu F."/>
            <person name="Nusskern D.R."/>
            <person name="Shue B.C."/>
            <person name="Zheng X.H."/>
            <person name="Zhong F."/>
            <person name="Delcher A.L."/>
            <person name="Huson D.H."/>
            <person name="Kravitz S.A."/>
            <person name="Mouchard L."/>
            <person name="Reinert K."/>
            <person name="Remington K.A."/>
            <person name="Clark A.G."/>
            <person name="Waterman M.S."/>
            <person name="Eichler E.E."/>
            <person name="Adams M.D."/>
            <person name="Hunkapiller M.W."/>
            <person name="Myers E.W."/>
            <person name="Venter J.C."/>
        </authorList>
    </citation>
    <scope>NUCLEOTIDE SEQUENCE [LARGE SCALE GENOMIC DNA]</scope>
</reference>
<reference key="7">
    <citation type="journal article" date="2003" name="Cancer Res.">
        <title>The homeotic protein Six3 is a coactivator of the nuclear receptor NOR-1 and a corepressor of the fusion protein EWS/NOR-1 in human extraskeletal myxoid chondrosarcomas.</title>
        <authorList>
            <person name="Laflamme C."/>
            <person name="Filion C."/>
            <person name="Bridge J.A."/>
            <person name="Ladanyi M."/>
            <person name="Goldring M.B."/>
            <person name="Labelle Y."/>
        </authorList>
    </citation>
    <scope>INTERACTION WITH NR4A3</scope>
</reference>
<reference key="8">
    <citation type="journal article" date="2003" name="Development">
        <title>Six3 and Six6 activity is modulated by members of the groucho family.</title>
        <authorList>
            <person name="Lopez-Rios J."/>
            <person name="Tessmar K."/>
            <person name="Loosli F."/>
            <person name="Wittbrodt J."/>
            <person name="Bovolenta P."/>
        </authorList>
    </citation>
    <scope>INTERACTION WITH TLE1 AND TLE5</scope>
    <scope>MUTAGENESIS OF PHE-87; VAL-95 AND LEU-99</scope>
</reference>
<reference key="9">
    <citation type="journal article" date="2004" name="Hum. Mutat.">
        <title>Functional characterization of SIX3 homeodomain mutations in holoprosencephaly: interaction with the nuclear receptor NR4A3/NOR1.</title>
        <authorList>
            <person name="Laflamme C."/>
            <person name="Filion C."/>
            <person name="Labelle Y."/>
        </authorList>
    </citation>
    <scope>CHARACTERIZATION OF VARIANTS HPE2 ALA-250 AND PRO-257</scope>
</reference>
<reference key="10">
    <citation type="journal article" date="2004" name="Nature">
        <title>Direct interaction of geminin and Six3 in eye development.</title>
        <authorList>
            <person name="Del Bene F."/>
            <person name="Tessmar-Raible K."/>
            <person name="Wittbrodt J."/>
        </authorList>
    </citation>
    <scope>INTERACTION WITH GMNN</scope>
</reference>
<reference key="11">
    <citation type="journal article" date="2008" name="Dev. Biol.">
        <title>Genetic interaction between the homeobox transcription factors HESX1 and SIX3 is required for normal pituitary development.</title>
        <authorList>
            <person name="Gaston-Massuet C."/>
            <person name="Andoniadou C.L."/>
            <person name="Signore M."/>
            <person name="Sajedi E."/>
            <person name="Bird S."/>
            <person name="Turner J.M."/>
            <person name="Martinez-Barbera J.P."/>
        </authorList>
    </citation>
    <scope>DEVELOPMENTAL STAGE</scope>
</reference>
<reference key="12">
    <citation type="journal article" date="2008" name="Hum. Mol. Genet.">
        <title>Mutations in the human SIX3 gene in holoprosencephaly are loss of function.</title>
        <authorList>
            <person name="Domene S."/>
            <person name="Roessler E."/>
            <person name="El-Jaick K.B."/>
            <person name="Snir M."/>
            <person name="Brown J.L."/>
            <person name="Velez J.I."/>
            <person name="Bale S."/>
            <person name="Lacbawan F."/>
            <person name="Muenke M."/>
            <person name="Feldman B."/>
        </authorList>
    </citation>
    <scope>FUNCTION IN EYE DEVELOPMENT AND FOREBRAIN DORSAL/VENTRAL PATTERN FORMATION</scope>
    <scope>INVOLVEMENT IN HPE2</scope>
    <scope>VARIANTS HPE2 CYS-37; ASP-93; CYS-113; LEU-114; ASP-138; ILE-157; VAL-172; HIS-174; VAL-213; TRP-218; PRO-218; PRO-227; CYS-244; LEU-254; LEU-258; HIS-262; SER-269 AND LEU-297</scope>
</reference>
<reference key="13">
    <citation type="journal article" date="1999" name="Nat. Genet.">
        <title>Mutations in the homeodomain of the human SIX3 gene cause holoprosencephaly.</title>
        <authorList>
            <person name="Wallis D.E."/>
            <person name="Roessler E."/>
            <person name="Hehr U."/>
            <person name="Nanni L."/>
            <person name="Wiltshire T."/>
            <person name="Richieri-Costa A."/>
            <person name="Gillessen-Kaesbach G."/>
            <person name="Zackai E.H."/>
            <person name="Rommens J."/>
            <person name="Muenke M."/>
        </authorList>
    </citation>
    <scope>VARIANTS HPE2 VAL-226; ALA-250 AND PRO-257</scope>
</reference>
<reference key="14">
    <citation type="journal article" date="2004" name="Hum. Mutat.">
        <title>Molecular screening of SHH, ZIC2, SIX3, and TGIF genes in patients with features of holoprosencephaly spectrum: mutation review and genotype-phenotype correlations.</title>
        <authorList>
            <person name="Dubourg C."/>
            <person name="Lazaro L."/>
            <person name="Pasquier L."/>
            <person name="Bendavid C."/>
            <person name="Blayau M."/>
            <person name="Le Duff F."/>
            <person name="Durou M.-R."/>
            <person name="Odent S."/>
            <person name="David V."/>
        </authorList>
    </citation>
    <scope>VARIANTS HPE2 GLY-92; VAL-105; PRO-173; ILE-202; ARG-231 AND TRP-257</scope>
</reference>
<reference key="15">
    <citation type="journal article" date="2006" name="Am. J. Med. Genet. A">
        <title>SIX3 mutations with holoprosencephaly.</title>
        <authorList>
            <person name="Ribeiro L.A."/>
            <person name="El-Jaick K.B."/>
            <person name="Muenke M."/>
            <person name="Richieri-Costa A."/>
        </authorList>
    </citation>
    <scope>VARIANT HPE2 ASP-69</scope>
</reference>
<reference key="16">
    <citation type="journal article" date="2010" name="Eur. J. Hum. Genet.">
        <title>The unfolding clinical spectrum of holoprosencephaly due to mutations in SHH, ZIC2, SIX3 and TGIF genes.</title>
        <authorList>
            <person name="Paulussen A.D."/>
            <person name="Schrander-Stumpel C.T."/>
            <person name="Tserpelis D.C."/>
            <person name="Spee M.K."/>
            <person name="Stegmann A.P."/>
            <person name="Mancini G.M."/>
            <person name="Brooks A.S."/>
            <person name="Collee M."/>
            <person name="Maat-Kievit A."/>
            <person name="Simon M.E."/>
            <person name="van Bever Y."/>
            <person name="Stolte-Dijkstra I."/>
            <person name="Kerstjens-Frederikse W.S."/>
            <person name="Herkert J.C."/>
            <person name="van Essen A.J."/>
            <person name="Lichtenbelt K.D."/>
            <person name="van Haeringen A."/>
            <person name="Kwee M.L."/>
            <person name="Lachmeijer A.M."/>
            <person name="Tan-Sindhunata G.M."/>
            <person name="van Maarle M.C."/>
            <person name="Arens Y.H."/>
            <person name="Smeets E.E."/>
            <person name="de Die-Smulders C.E."/>
            <person name="Engelen J.J."/>
            <person name="Smeets H.J."/>
            <person name="Herbergs J."/>
        </authorList>
    </citation>
    <scope>VARIANTS HPE2 VAL-79; HIS-155 DEL; GLY-257; MET-269 AND THR-269</scope>
</reference>
<reference key="17">
    <citation type="journal article" date="2010" name="Hum. Genet.">
        <title>Heterozygous mutations in SIX3 and SHH are associated with schizencephaly and further expand the clinical spectrum of holoprosencephaly.</title>
        <authorList>
            <person name="Hehr U."/>
            <person name="Pineda-Alvarez D.E."/>
            <person name="Uyanik G."/>
            <person name="Hu P."/>
            <person name="Zhou N."/>
            <person name="Hehr A."/>
            <person name="Schell-Apacik C."/>
            <person name="Altus C."/>
            <person name="Daumer-Haas C."/>
            <person name="Meiner A."/>
            <person name="Steuernagel P."/>
            <person name="Roessler E."/>
            <person name="Winkler J."/>
            <person name="Muenke M."/>
        </authorList>
    </citation>
    <scope>INVOLVEMENT IN SCHZC</scope>
    <scope>VARIANTS SCHZC CYS-37 AND SER-167</scope>
</reference>
<sequence>MVFRSPLDLYSSHFLLPNFADSHHRSILLASSGGGNGAGGGGGAGGGSGGGNGAGGGGAGGAGGGGGGGSRAPPEELSMFQLPTLNFSPEQVASVCETLEETGDIERLGRFLWSLPVAPGACEAINKHESILRARAVVAFHTGNFRDLYHILENHKFTKESHGKLQAMWLEAHYQEAEKLRGRPLGPVDKYRVRKKFPLPRTIWDGEQKTHCFKERTRSLLREWYLQDPYPNPSKKRELAQATGLTPTQVGNWFKNRRQRDRAAAAKNRLQHQAIGPSGMRSLAEPGCPTHGSAESPSTAASPTTSVSSLTERADTGTSILSVTSSDSECDV</sequence>
<feature type="chain" id="PRO_0000049299" description="Homeobox protein SIX3">
    <location>
        <begin position="1"/>
        <end position="332"/>
    </location>
</feature>
<feature type="DNA-binding region" description="Homeobox" evidence="2">
    <location>
        <begin position="206"/>
        <end position="265"/>
    </location>
</feature>
<feature type="region of interest" description="Interaction with TLE5" evidence="1">
    <location>
        <begin position="72"/>
        <end position="119"/>
    </location>
</feature>
<feature type="region of interest" description="Disordered" evidence="3">
    <location>
        <begin position="232"/>
        <end position="251"/>
    </location>
</feature>
<feature type="region of interest" description="Bind to RHO promoter" evidence="1">
    <location>
        <begin position="232"/>
        <end position="234"/>
    </location>
</feature>
<feature type="region of interest" description="Disordered" evidence="3">
    <location>
        <begin position="258"/>
        <end position="332"/>
    </location>
</feature>
<feature type="compositionally biased region" description="Low complexity" evidence="3">
    <location>
        <begin position="293"/>
        <end position="309"/>
    </location>
</feature>
<feature type="compositionally biased region" description="Polar residues" evidence="3">
    <location>
        <begin position="316"/>
        <end position="332"/>
    </location>
</feature>
<feature type="sequence variant" id="VAR_071335" description="In SCHZC and HPE2; dbSNP:rs199823175." evidence="12 13">
    <original>G</original>
    <variation>C</variation>
    <location>
        <position position="37"/>
    </location>
</feature>
<feature type="sequence variant" id="VAR_038418" description="In HPE2; dbSNP:rs121917881." evidence="10">
    <original>G</original>
    <variation>D</variation>
    <location>
        <position position="69"/>
    </location>
</feature>
<feature type="sequence variant" id="VAR_071336" description="In HPE2." evidence="14">
    <original>M</original>
    <variation>V</variation>
    <location>
        <position position="79"/>
    </location>
</feature>
<feature type="sequence variant" id="VAR_023797" description="In HPE2." evidence="8">
    <original>V</original>
    <variation>G</variation>
    <location>
        <position position="92"/>
    </location>
</feature>
<feature type="sequence variant" id="VAR_071337" description="In HPE2." evidence="12">
    <original>A</original>
    <variation>D</variation>
    <location>
        <position position="93"/>
    </location>
</feature>
<feature type="sequence variant" id="VAR_023798" description="In HPE2." evidence="8">
    <original>I</original>
    <variation>V</variation>
    <location>
        <position position="105"/>
    </location>
</feature>
<feature type="sequence variant" id="VAR_071338" description="In HPE2; dbSNP:rs137853021." evidence="12">
    <original>W</original>
    <variation>C</variation>
    <location>
        <position position="113"/>
    </location>
</feature>
<feature type="sequence variant" id="VAR_071339" description="In HPE2." evidence="12">
    <original>S</original>
    <variation>L</variation>
    <location>
        <position position="114"/>
    </location>
</feature>
<feature type="sequence variant" id="VAR_071340" description="In HPE2." evidence="12">
    <original>V</original>
    <variation>D</variation>
    <location>
        <position position="138"/>
    </location>
</feature>
<feature type="sequence variant" id="VAR_071341" description="In HPE2." evidence="14">
    <location>
        <position position="155"/>
    </location>
</feature>
<feature type="sequence variant" id="VAR_071342" description="In HPE2." evidence="12">
    <original>F</original>
    <variation>I</variation>
    <location>
        <position position="157"/>
    </location>
</feature>
<feature type="sequence variant" id="VAR_071343" description="In SCHZC; dbSNP:rs387906868." evidence="13">
    <original>A</original>
    <variation>S</variation>
    <location>
        <position position="167"/>
    </location>
</feature>
<feature type="sequence variant" id="VAR_071344" description="In HPE2." evidence="12">
    <original>A</original>
    <variation>V</variation>
    <location>
        <position position="172"/>
    </location>
</feature>
<feature type="sequence variant" id="VAR_023799" description="In HPE2." evidence="8">
    <original>H</original>
    <variation>P</variation>
    <location>
        <position position="173"/>
    </location>
</feature>
<feature type="sequence variant" id="VAR_071345" description="In HPE2." evidence="12">
    <original>Y</original>
    <variation>H</variation>
    <location>
        <position position="174"/>
    </location>
</feature>
<feature type="sequence variant" id="VAR_023800" description="In HPE2." evidence="8">
    <original>T</original>
    <variation>I</variation>
    <location>
        <position position="202"/>
    </location>
</feature>
<feature type="sequence variant" id="VAR_071346" description="In HPE2." evidence="12">
    <original>F</original>
    <variation>V</variation>
    <location>
        <position position="213"/>
    </location>
</feature>
<feature type="sequence variant" id="VAR_071347" description="In HPE2." evidence="12">
    <original>R</original>
    <variation>P</variation>
    <location>
        <position position="218"/>
    </location>
</feature>
<feature type="sequence variant" id="VAR_071348" description="In HPE2." evidence="12">
    <original>R</original>
    <variation>W</variation>
    <location>
        <position position="218"/>
    </location>
</feature>
<feature type="sequence variant" id="VAR_003771" description="In HPE2; dbSNP:rs121917878." evidence="4">
    <original>L</original>
    <variation>V</variation>
    <location>
        <position position="226"/>
    </location>
</feature>
<feature type="sequence variant" id="VAR_071349" description="In HPE2." evidence="12">
    <original>Q</original>
    <variation>P</variation>
    <location>
        <position position="227"/>
    </location>
</feature>
<feature type="sequence variant" id="VAR_023801" description="In HPE2." evidence="8">
    <original>P</original>
    <variation>R</variation>
    <location>
        <position position="231"/>
    </location>
</feature>
<feature type="sequence variant" id="VAR_071350" description="In HPE2; dbSNP:rs989286015." evidence="12">
    <original>G</original>
    <variation>C</variation>
    <location>
        <position position="244"/>
    </location>
</feature>
<feature type="sequence variant" id="VAR_003772" description="In HPE2; Significantly decreased its ability to activate NR4A3; dbSNP:rs121917880." evidence="4 9">
    <original>V</original>
    <variation>A</variation>
    <location>
        <position position="250"/>
    </location>
</feature>
<feature type="sequence variant" id="VAR_071351" description="In HPE2." evidence="12">
    <original>F</original>
    <variation>L</variation>
    <location>
        <position position="254"/>
    </location>
</feature>
<feature type="sequence variant" id="VAR_071352" description="In HPE2." evidence="14">
    <original>R</original>
    <variation>G</variation>
    <location>
        <position position="257"/>
    </location>
</feature>
<feature type="sequence variant" id="VAR_003773" description="In HPE2; Significantly decreased interaction with NR4A3; Significantly decreased its ability to activate NR4A3; dbSNP:rs121917879." evidence="4 9">
    <original>R</original>
    <variation>P</variation>
    <location>
        <position position="257"/>
    </location>
</feature>
<feature type="sequence variant" id="VAR_023802" description="In HPE2." evidence="8">
    <original>R</original>
    <variation>W</variation>
    <location>
        <position position="257"/>
    </location>
</feature>
<feature type="sequence variant" id="VAR_071353" description="In HPE2." evidence="12">
    <original>R</original>
    <variation>L</variation>
    <location>
        <position position="258"/>
    </location>
</feature>
<feature type="sequence variant" id="VAR_071354" description="In HPE2." evidence="12">
    <original>R</original>
    <variation>H</variation>
    <location>
        <position position="262"/>
    </location>
</feature>
<feature type="sequence variant" id="VAR_071355" description="In HPE2." evidence="14">
    <original>R</original>
    <variation>M</variation>
    <location>
        <position position="269"/>
    </location>
</feature>
<feature type="sequence variant" id="VAR_071356" description="In HPE2." evidence="12">
    <original>R</original>
    <variation>S</variation>
    <location>
        <position position="269"/>
    </location>
</feature>
<feature type="sequence variant" id="VAR_071357" description="In HPE2." evidence="14">
    <original>R</original>
    <variation>T</variation>
    <location>
        <position position="269"/>
    </location>
</feature>
<feature type="sequence variant" id="VAR_071358" description="In HPE2; dbSNP:rs780942050." evidence="12">
    <original>P</original>
    <variation>L</variation>
    <location>
        <position position="297"/>
    </location>
</feature>
<feature type="mutagenesis site" description="Decreased interaction with TLE5 and loss of interaction with TLE1." evidence="5">
    <original>F</original>
    <variation>E</variation>
    <location>
        <position position="87"/>
    </location>
</feature>
<feature type="mutagenesis site" description="Loss of interaction with TLE1 and TLE5; when associated with P-99." evidence="5">
    <original>V</original>
    <variation>P</variation>
    <location>
        <position position="95"/>
    </location>
</feature>
<feature type="mutagenesis site" description="Loss of interaction with TLE1 and TLE5; when associated with P-95." evidence="5">
    <original>L</original>
    <variation>P</variation>
    <location>
        <position position="99"/>
    </location>
</feature>